<organism>
    <name type="scientific">Bos taurus</name>
    <name type="common">Bovine</name>
    <dbReference type="NCBI Taxonomy" id="9913"/>
    <lineage>
        <taxon>Eukaryota</taxon>
        <taxon>Metazoa</taxon>
        <taxon>Chordata</taxon>
        <taxon>Craniata</taxon>
        <taxon>Vertebrata</taxon>
        <taxon>Euteleostomi</taxon>
        <taxon>Mammalia</taxon>
        <taxon>Eutheria</taxon>
        <taxon>Laurasiatheria</taxon>
        <taxon>Artiodactyla</taxon>
        <taxon>Ruminantia</taxon>
        <taxon>Pecora</taxon>
        <taxon>Bovidae</taxon>
        <taxon>Bovinae</taxon>
        <taxon>Bos</taxon>
    </lineage>
</organism>
<evidence type="ECO:0000255" key="1">
    <source>
        <dbReference type="PROSITE-ProRule" id="PRU01188"/>
    </source>
</evidence>
<evidence type="ECO:0000256" key="2">
    <source>
        <dbReference type="SAM" id="MobiDB-lite"/>
    </source>
</evidence>
<accession>P04263</accession>
<protein>
    <recommendedName>
        <fullName>Keratin, type II cytoskeletal 68 kDa, component IA</fullName>
    </recommendedName>
</protein>
<feature type="chain" id="PRO_0000063744" description="Keratin, type II cytoskeletal 68 kDa, component IA">
    <location>
        <begin position="1" status="less than"/>
        <end position="182"/>
    </location>
</feature>
<feature type="domain" description="IF rod" evidence="1">
    <location>
        <begin position="1" status="less than"/>
        <end position="66"/>
    </location>
</feature>
<feature type="region of interest" description="Coil 2B">
    <location>
        <begin position="1" status="less than"/>
        <end position="66"/>
    </location>
</feature>
<feature type="region of interest" description="Tail">
    <location>
        <begin position="67"/>
        <end position="182"/>
    </location>
</feature>
<feature type="region of interest" description="H2 subdomain">
    <location>
        <begin position="67"/>
        <end position="86"/>
    </location>
</feature>
<feature type="region of interest" description="V2 subdomain">
    <location>
        <begin position="87"/>
        <end position="162"/>
    </location>
</feature>
<feature type="region of interest" description="Disordered" evidence="2">
    <location>
        <begin position="104"/>
        <end position="182"/>
    </location>
</feature>
<feature type="region of interest" description="E2 subdomain">
    <location>
        <begin position="163"/>
        <end position="182"/>
    </location>
</feature>
<feature type="compositionally biased region" description="Gly residues" evidence="2">
    <location>
        <begin position="104"/>
        <end position="124"/>
    </location>
</feature>
<feature type="compositionally biased region" description="Low complexity" evidence="2">
    <location>
        <begin position="144"/>
        <end position="158"/>
    </location>
</feature>
<feature type="compositionally biased region" description="Low complexity" evidence="2">
    <location>
        <begin position="165"/>
        <end position="176"/>
    </location>
</feature>
<feature type="site" description="Stutter">
    <location>
        <position position="4"/>
    </location>
</feature>
<feature type="non-terminal residue">
    <location>
        <position position="1"/>
    </location>
</feature>
<sequence length="182" mass="18135">DAEQHGEVALKDANAKLQDLKAALQQAKEDLARLLKEYQELMNVKLALDIEIATYRTLLEGEECRMSGECQSSVSIEMVHNTTSSSSGGSGALGGGAGGRGGLGSGGLGSGSLGSGRLGSGGRGSRASRGNLALDSSSGGGSAVRGSVSNSGGSCAVSGVGGRGSVRVTQSSSQSQRSHHKL</sequence>
<reference key="1">
    <citation type="journal article" date="1984" name="Differentiation">
        <title>Amino acid sequence diversity between bovine epidermal cytokeratin polypeptides of the basic (type II) subfamily as determined from cDNA clones.</title>
        <authorList>
            <person name="Jorcano J.L."/>
            <person name="Franz J.K."/>
            <person name="Franke W.W."/>
        </authorList>
    </citation>
    <scope>NUCLEOTIDE SEQUENCE [MRNA]</scope>
</reference>
<dbReference type="EMBL" id="K03533">
    <property type="protein sequence ID" value="AAA30599.1"/>
    <property type="molecule type" value="mRNA"/>
</dbReference>
<dbReference type="PIR" id="A02949">
    <property type="entry name" value="KRBO2A"/>
</dbReference>
<dbReference type="SMR" id="P04263"/>
<dbReference type="STRING" id="9913.ENSBTAP00000057820"/>
<dbReference type="PaxDb" id="9913-ENSBTAP00000040129"/>
<dbReference type="PeptideAtlas" id="P04263"/>
<dbReference type="eggNOG" id="ENOG502QSI5">
    <property type="taxonomic scope" value="Eukaryota"/>
</dbReference>
<dbReference type="InParanoid" id="P04263"/>
<dbReference type="Proteomes" id="UP000009136">
    <property type="component" value="Unplaced"/>
</dbReference>
<dbReference type="GO" id="GO:0005882">
    <property type="term" value="C:intermediate filament"/>
    <property type="evidence" value="ECO:0007669"/>
    <property type="project" value="UniProtKB-KW"/>
</dbReference>
<dbReference type="FunFam" id="1.20.5.170:FF:000004">
    <property type="entry name" value="Keratin, type II cytoskeletal 5"/>
    <property type="match status" value="1"/>
</dbReference>
<dbReference type="Gene3D" id="1.20.5.170">
    <property type="match status" value="1"/>
</dbReference>
<dbReference type="InterPro" id="IPR018039">
    <property type="entry name" value="IF_conserved"/>
</dbReference>
<dbReference type="InterPro" id="IPR039008">
    <property type="entry name" value="IF_rod_dom"/>
</dbReference>
<dbReference type="PANTHER" id="PTHR45616">
    <property type="entry name" value="GATA-TYPE DOMAIN-CONTAINING PROTEIN"/>
    <property type="match status" value="1"/>
</dbReference>
<dbReference type="PANTHER" id="PTHR45616:SF45">
    <property type="entry name" value="IF ROD DOMAIN-CONTAINING PROTEIN"/>
    <property type="match status" value="1"/>
</dbReference>
<dbReference type="Pfam" id="PF00038">
    <property type="entry name" value="Filament"/>
    <property type="match status" value="1"/>
</dbReference>
<dbReference type="SUPFAM" id="SSF64593">
    <property type="entry name" value="Intermediate filament protein, coiled coil region"/>
    <property type="match status" value="1"/>
</dbReference>
<dbReference type="PROSITE" id="PS00226">
    <property type="entry name" value="IF_ROD_1"/>
    <property type="match status" value="1"/>
</dbReference>
<dbReference type="PROSITE" id="PS51842">
    <property type="entry name" value="IF_ROD_2"/>
    <property type="match status" value="1"/>
</dbReference>
<proteinExistence type="evidence at transcript level"/>
<name>K2CA_BOVIN</name>
<comment type="subunit">
    <text>Heterotetramer of two type I and two type II keratins.</text>
</comment>
<comment type="miscellaneous">
    <text>There are two types of cytoskeletal and microfibrillar keratin: I (acidic; 40-55 kDa) and II (neutral to basic; 56-70 kDa).</text>
</comment>
<comment type="similarity">
    <text evidence="1">Belongs to the intermediate filament family.</text>
</comment>
<keyword id="KW-0175">Coiled coil</keyword>
<keyword id="KW-0403">Intermediate filament</keyword>
<keyword id="KW-0416">Keratin</keyword>
<keyword id="KW-1185">Reference proteome</keyword>